<reference key="1">
    <citation type="journal article" date="2009" name="Appl. Environ. Microbiol.">
        <title>Three genomes from the phylum Acidobacteria provide insight into the lifestyles of these microorganisms in soils.</title>
        <authorList>
            <person name="Ward N.L."/>
            <person name="Challacombe J.F."/>
            <person name="Janssen P.H."/>
            <person name="Henrissat B."/>
            <person name="Coutinho P.M."/>
            <person name="Wu M."/>
            <person name="Xie G."/>
            <person name="Haft D.H."/>
            <person name="Sait M."/>
            <person name="Badger J."/>
            <person name="Barabote R.D."/>
            <person name="Bradley B."/>
            <person name="Brettin T.S."/>
            <person name="Brinkac L.M."/>
            <person name="Bruce D."/>
            <person name="Creasy T."/>
            <person name="Daugherty S.C."/>
            <person name="Davidsen T.M."/>
            <person name="DeBoy R.T."/>
            <person name="Detter J.C."/>
            <person name="Dodson R.J."/>
            <person name="Durkin A.S."/>
            <person name="Ganapathy A."/>
            <person name="Gwinn-Giglio M."/>
            <person name="Han C.S."/>
            <person name="Khouri H."/>
            <person name="Kiss H."/>
            <person name="Kothari S.P."/>
            <person name="Madupu R."/>
            <person name="Nelson K.E."/>
            <person name="Nelson W.C."/>
            <person name="Paulsen I."/>
            <person name="Penn K."/>
            <person name="Ren Q."/>
            <person name="Rosovitz M.J."/>
            <person name="Selengut J.D."/>
            <person name="Shrivastava S."/>
            <person name="Sullivan S.A."/>
            <person name="Tapia R."/>
            <person name="Thompson L.S."/>
            <person name="Watkins K.L."/>
            <person name="Yang Q."/>
            <person name="Yu C."/>
            <person name="Zafar N."/>
            <person name="Zhou L."/>
            <person name="Kuske C.R."/>
        </authorList>
    </citation>
    <scope>NUCLEOTIDE SEQUENCE [LARGE SCALE GENOMIC DNA]</scope>
    <source>
        <strain>Ellin345</strain>
    </source>
</reference>
<organism>
    <name type="scientific">Koribacter versatilis (strain Ellin345)</name>
    <dbReference type="NCBI Taxonomy" id="204669"/>
    <lineage>
        <taxon>Bacteria</taxon>
        <taxon>Pseudomonadati</taxon>
        <taxon>Acidobacteriota</taxon>
        <taxon>Terriglobia</taxon>
        <taxon>Terriglobales</taxon>
        <taxon>Candidatus Korobacteraceae</taxon>
        <taxon>Candidatus Korobacter</taxon>
    </lineage>
</organism>
<comment type="function">
    <text evidence="1">With S4 and S12 plays an important role in translational accuracy.</text>
</comment>
<comment type="function">
    <text evidence="1">Located at the back of the 30S subunit body where it stabilizes the conformation of the head with respect to the body.</text>
</comment>
<comment type="subunit">
    <text evidence="1">Part of the 30S ribosomal subunit. Contacts proteins S4 and S8.</text>
</comment>
<comment type="domain">
    <text>The N-terminal domain interacts with the head of the 30S subunit; the C-terminal domain interacts with the body and contacts protein S4. The interaction surface between S4 and S5 is involved in control of translational fidelity.</text>
</comment>
<comment type="similarity">
    <text evidence="1">Belongs to the universal ribosomal protein uS5 family.</text>
</comment>
<accession>Q1ISA5</accession>
<proteinExistence type="inferred from homology"/>
<evidence type="ECO:0000255" key="1">
    <source>
        <dbReference type="HAMAP-Rule" id="MF_01307"/>
    </source>
</evidence>
<evidence type="ECO:0000305" key="2"/>
<keyword id="KW-1185">Reference proteome</keyword>
<keyword id="KW-0687">Ribonucleoprotein</keyword>
<keyword id="KW-0689">Ribosomal protein</keyword>
<keyword id="KW-0694">RNA-binding</keyword>
<keyword id="KW-0699">rRNA-binding</keyword>
<dbReference type="EMBL" id="CP000360">
    <property type="protein sequence ID" value="ABF40245.1"/>
    <property type="molecule type" value="Genomic_DNA"/>
</dbReference>
<dbReference type="RefSeq" id="WP_011522047.1">
    <property type="nucleotide sequence ID" value="NC_008009.1"/>
</dbReference>
<dbReference type="SMR" id="Q1ISA5"/>
<dbReference type="STRING" id="204669.Acid345_1243"/>
<dbReference type="EnsemblBacteria" id="ABF40245">
    <property type="protein sequence ID" value="ABF40245"/>
    <property type="gene ID" value="Acid345_1243"/>
</dbReference>
<dbReference type="KEGG" id="aba:Acid345_1243"/>
<dbReference type="eggNOG" id="COG0098">
    <property type="taxonomic scope" value="Bacteria"/>
</dbReference>
<dbReference type="HOGENOM" id="CLU_065898_2_2_0"/>
<dbReference type="OrthoDB" id="9809045at2"/>
<dbReference type="Proteomes" id="UP000002432">
    <property type="component" value="Chromosome"/>
</dbReference>
<dbReference type="GO" id="GO:0015935">
    <property type="term" value="C:small ribosomal subunit"/>
    <property type="evidence" value="ECO:0007669"/>
    <property type="project" value="InterPro"/>
</dbReference>
<dbReference type="GO" id="GO:0019843">
    <property type="term" value="F:rRNA binding"/>
    <property type="evidence" value="ECO:0007669"/>
    <property type="project" value="UniProtKB-UniRule"/>
</dbReference>
<dbReference type="GO" id="GO:0003735">
    <property type="term" value="F:structural constituent of ribosome"/>
    <property type="evidence" value="ECO:0007669"/>
    <property type="project" value="InterPro"/>
</dbReference>
<dbReference type="GO" id="GO:0006412">
    <property type="term" value="P:translation"/>
    <property type="evidence" value="ECO:0007669"/>
    <property type="project" value="UniProtKB-UniRule"/>
</dbReference>
<dbReference type="FunFam" id="3.30.160.20:FF:000001">
    <property type="entry name" value="30S ribosomal protein S5"/>
    <property type="match status" value="1"/>
</dbReference>
<dbReference type="FunFam" id="3.30.230.10:FF:000002">
    <property type="entry name" value="30S ribosomal protein S5"/>
    <property type="match status" value="1"/>
</dbReference>
<dbReference type="Gene3D" id="3.30.160.20">
    <property type="match status" value="1"/>
</dbReference>
<dbReference type="Gene3D" id="3.30.230.10">
    <property type="match status" value="1"/>
</dbReference>
<dbReference type="HAMAP" id="MF_01307_B">
    <property type="entry name" value="Ribosomal_uS5_B"/>
    <property type="match status" value="1"/>
</dbReference>
<dbReference type="InterPro" id="IPR020568">
    <property type="entry name" value="Ribosomal_Su5_D2-typ_SF"/>
</dbReference>
<dbReference type="InterPro" id="IPR000851">
    <property type="entry name" value="Ribosomal_uS5"/>
</dbReference>
<dbReference type="InterPro" id="IPR005712">
    <property type="entry name" value="Ribosomal_uS5_bac-type"/>
</dbReference>
<dbReference type="InterPro" id="IPR005324">
    <property type="entry name" value="Ribosomal_uS5_C"/>
</dbReference>
<dbReference type="InterPro" id="IPR013810">
    <property type="entry name" value="Ribosomal_uS5_N"/>
</dbReference>
<dbReference type="InterPro" id="IPR014721">
    <property type="entry name" value="Ribsml_uS5_D2-typ_fold_subgr"/>
</dbReference>
<dbReference type="NCBIfam" id="TIGR01021">
    <property type="entry name" value="rpsE_bact"/>
    <property type="match status" value="1"/>
</dbReference>
<dbReference type="PANTHER" id="PTHR48432">
    <property type="entry name" value="S5 DRBM DOMAIN-CONTAINING PROTEIN"/>
    <property type="match status" value="1"/>
</dbReference>
<dbReference type="PANTHER" id="PTHR48432:SF1">
    <property type="entry name" value="S5 DRBM DOMAIN-CONTAINING PROTEIN"/>
    <property type="match status" value="1"/>
</dbReference>
<dbReference type="Pfam" id="PF00333">
    <property type="entry name" value="Ribosomal_S5"/>
    <property type="match status" value="1"/>
</dbReference>
<dbReference type="Pfam" id="PF03719">
    <property type="entry name" value="Ribosomal_S5_C"/>
    <property type="match status" value="1"/>
</dbReference>
<dbReference type="SUPFAM" id="SSF54768">
    <property type="entry name" value="dsRNA-binding domain-like"/>
    <property type="match status" value="1"/>
</dbReference>
<dbReference type="SUPFAM" id="SSF54211">
    <property type="entry name" value="Ribosomal protein S5 domain 2-like"/>
    <property type="match status" value="1"/>
</dbReference>
<dbReference type="PROSITE" id="PS50881">
    <property type="entry name" value="S5_DSRBD"/>
    <property type="match status" value="1"/>
</dbReference>
<feature type="chain" id="PRO_0000323050" description="Small ribosomal subunit protein uS5">
    <location>
        <begin position="1"/>
        <end position="169"/>
    </location>
</feature>
<feature type="domain" description="S5 DRBM" evidence="1">
    <location>
        <begin position="15"/>
        <end position="79"/>
    </location>
</feature>
<protein>
    <recommendedName>
        <fullName evidence="1">Small ribosomal subunit protein uS5</fullName>
    </recommendedName>
    <alternativeName>
        <fullName evidence="2">30S ribosomal protein S5</fullName>
    </alternativeName>
</protein>
<sequence>MATVKKKLDAGQFNLKDQVVAINRVTKVVKGGKNLSFAALVVVGDPSAAVVGYGSGKAKEVPQAIRKGIESAKKNLVKVNLSQTSIPHQVLGRYGSGRVMLKPAPEGTGVIAGGAVRAVMTSAGVQNVLTKSIGTTNPHNVIKATFEALKQLRDRREVAAGRGKTVEEL</sequence>
<gene>
    <name evidence="1" type="primary">rpsE</name>
    <name type="ordered locus">Acid345_1243</name>
</gene>
<name>RS5_KORVE</name>